<organism>
    <name type="scientific">Danio rerio</name>
    <name type="common">Zebrafish</name>
    <name type="synonym">Brachydanio rerio</name>
    <dbReference type="NCBI Taxonomy" id="7955"/>
    <lineage>
        <taxon>Eukaryota</taxon>
        <taxon>Metazoa</taxon>
        <taxon>Chordata</taxon>
        <taxon>Craniata</taxon>
        <taxon>Vertebrata</taxon>
        <taxon>Euteleostomi</taxon>
        <taxon>Actinopterygii</taxon>
        <taxon>Neopterygii</taxon>
        <taxon>Teleostei</taxon>
        <taxon>Ostariophysi</taxon>
        <taxon>Cypriniformes</taxon>
        <taxon>Danionidae</taxon>
        <taxon>Danioninae</taxon>
        <taxon>Danio</taxon>
    </lineage>
</organism>
<gene>
    <name evidence="4" type="primary">rps15a</name>
</gene>
<comment type="function">
    <text evidence="1 2">Component of the small ribosomal subunit (By similarity). Part of the small subunit (SSU) processome, first precursor of the small eukaryotic ribosomal subunit. During the assembly of the SSU processome in the nucleolus, many ribosome biogenesis factors, an RNA chaperone and ribosomal proteins associate with the nascent pre-rRNA and work in concert to generate RNA folding, modifications, rearrangements and cleavage as well as targeted degradation of pre-ribosomal RNA by the RNA exosome (By similarity). Required for erythropoiesis during embryonic development (PubMed:27909223).</text>
</comment>
<comment type="subunit">
    <text evidence="1">Component of the 40S ribosomal subunit. Part of the small subunit (SSU) processome, composed of more than 70 proteins and the RNA chaperone small nucleolar RNA (snoRNA) U3.</text>
</comment>
<comment type="subcellular location">
    <subcellularLocation>
        <location evidence="1">Cytoplasm</location>
    </subcellularLocation>
    <subcellularLocation>
        <location evidence="1">Nucleus</location>
        <location evidence="1">Nucleolus</location>
    </subcellularLocation>
</comment>
<comment type="disruption phenotype">
    <text evidence="2">Morpholino-injected embryos have a thin yolk sac, bent tail, and show a marked decrease of erythrocyte production.</text>
</comment>
<comment type="similarity">
    <text evidence="3">Belongs to the universal ribosomal protein uS8 family.</text>
</comment>
<feature type="chain" id="PRO_0000447680" description="Small ribosomal subunit protein uS8">
    <location>
        <begin position="1"/>
        <end position="130"/>
    </location>
</feature>
<name>RS15A_DANRE</name>
<protein>
    <recommendedName>
        <fullName evidence="3">Small ribosomal subunit protein uS8</fullName>
    </recommendedName>
    <alternativeName>
        <fullName evidence="1">40S ribosomal protein S15a</fullName>
    </alternativeName>
</protein>
<evidence type="ECO:0000250" key="1">
    <source>
        <dbReference type="UniProtKB" id="P62244"/>
    </source>
</evidence>
<evidence type="ECO:0000269" key="2">
    <source>
    </source>
</evidence>
<evidence type="ECO:0000305" key="3"/>
<evidence type="ECO:0000312" key="4">
    <source>
        <dbReference type="ZFIN" id="ZDB-GENE-030131-8708"/>
    </source>
</evidence>
<dbReference type="EMBL" id="AY561512">
    <property type="protein sequence ID" value="AAS66965.1"/>
    <property type="molecule type" value="mRNA"/>
</dbReference>
<dbReference type="EMBL" id="CR450821">
    <property type="status" value="NOT_ANNOTATED_CDS"/>
    <property type="molecule type" value="Genomic_DNA"/>
</dbReference>
<dbReference type="EMBL" id="BC107523">
    <property type="protein sequence ID" value="AAI07524.1"/>
    <property type="molecule type" value="mRNA"/>
</dbReference>
<dbReference type="RefSeq" id="NP_997927.1">
    <property type="nucleotide sequence ID" value="NM_212762.1"/>
</dbReference>
<dbReference type="PDB" id="7OYA">
    <property type="method" value="EM"/>
    <property type="resolution" value="3.20 A"/>
    <property type="chains" value="W2=1-130"/>
</dbReference>
<dbReference type="PDB" id="7OYB">
    <property type="method" value="EM"/>
    <property type="resolution" value="2.40 A"/>
    <property type="chains" value="W2=1-130"/>
</dbReference>
<dbReference type="PDBsum" id="7OYA"/>
<dbReference type="PDBsum" id="7OYB"/>
<dbReference type="EMDB" id="EMD-13111"/>
<dbReference type="EMDB" id="EMD-13112"/>
<dbReference type="SMR" id="Q6Q420"/>
<dbReference type="FunCoup" id="Q6Q420">
    <property type="interactions" value="1931"/>
</dbReference>
<dbReference type="STRING" id="7955.ENSDARP00000108197"/>
<dbReference type="PaxDb" id="7955-ENSDARP00000108197"/>
<dbReference type="Ensembl" id="ENSDART00000128613">
    <property type="protein sequence ID" value="ENSDARP00000108197"/>
    <property type="gene ID" value="ENSDARG00000010160"/>
</dbReference>
<dbReference type="Ensembl" id="ENSDART00000172555">
    <property type="protein sequence ID" value="ENSDARP00000134460"/>
    <property type="gene ID" value="ENSDARG00000010160"/>
</dbReference>
<dbReference type="GeneID" id="336764"/>
<dbReference type="KEGG" id="dre:336764"/>
<dbReference type="AGR" id="ZFIN:ZDB-GENE-030131-8708"/>
<dbReference type="CTD" id="6210"/>
<dbReference type="ZFIN" id="ZDB-GENE-030131-8708">
    <property type="gene designation" value="rps15a"/>
</dbReference>
<dbReference type="eggNOG" id="KOG1754">
    <property type="taxonomic scope" value="Eukaryota"/>
</dbReference>
<dbReference type="HOGENOM" id="CLU_098428_1_1_1"/>
<dbReference type="InParanoid" id="Q6Q420"/>
<dbReference type="OMA" id="LPAKNFG"/>
<dbReference type="OrthoDB" id="10250260at2759"/>
<dbReference type="PhylomeDB" id="Q6Q420"/>
<dbReference type="TreeFam" id="TF300067"/>
<dbReference type="Reactome" id="R-DRE-156827">
    <property type="pathway name" value="L13a-mediated translational silencing of Ceruloplasmin expression"/>
</dbReference>
<dbReference type="Reactome" id="R-DRE-1799339">
    <property type="pathway name" value="SRP-dependent cotranslational protein targeting to membrane"/>
</dbReference>
<dbReference type="Reactome" id="R-DRE-72689">
    <property type="pathway name" value="Formation of a pool of free 40S subunits"/>
</dbReference>
<dbReference type="Reactome" id="R-DRE-72695">
    <property type="pathway name" value="Formation of the ternary complex, and subsequently, the 43S complex"/>
</dbReference>
<dbReference type="Reactome" id="R-DRE-72702">
    <property type="pathway name" value="Ribosomal scanning and start codon recognition"/>
</dbReference>
<dbReference type="Reactome" id="R-DRE-975956">
    <property type="pathway name" value="Nonsense Mediated Decay (NMD) independent of the Exon Junction Complex (EJC)"/>
</dbReference>
<dbReference type="Reactome" id="R-DRE-975957">
    <property type="pathway name" value="Nonsense Mediated Decay (NMD) enhanced by the Exon Junction Complex (EJC)"/>
</dbReference>
<dbReference type="PRO" id="PR:Q6Q420"/>
<dbReference type="Proteomes" id="UP000000437">
    <property type="component" value="Chromosome 3"/>
</dbReference>
<dbReference type="Bgee" id="ENSDARG00000010160">
    <property type="expression patterns" value="Expressed in testis and 28 other cell types or tissues"/>
</dbReference>
<dbReference type="GO" id="GO:0022627">
    <property type="term" value="C:cytosolic small ribosomal subunit"/>
    <property type="evidence" value="ECO:0000318"/>
    <property type="project" value="GO_Central"/>
</dbReference>
<dbReference type="GO" id="GO:0005730">
    <property type="term" value="C:nucleolus"/>
    <property type="evidence" value="ECO:0007669"/>
    <property type="project" value="UniProtKB-SubCell"/>
</dbReference>
<dbReference type="GO" id="GO:0032040">
    <property type="term" value="C:small-subunit processome"/>
    <property type="evidence" value="ECO:0000250"/>
    <property type="project" value="UniProtKB"/>
</dbReference>
<dbReference type="GO" id="GO:0003735">
    <property type="term" value="F:structural constituent of ribosome"/>
    <property type="evidence" value="ECO:0000318"/>
    <property type="project" value="GO_Central"/>
</dbReference>
<dbReference type="GO" id="GO:0007420">
    <property type="term" value="P:brain development"/>
    <property type="evidence" value="ECO:0000315"/>
    <property type="project" value="ZFIN"/>
</dbReference>
<dbReference type="GO" id="GO:0043009">
    <property type="term" value="P:chordate embryonic development"/>
    <property type="evidence" value="ECO:0000315"/>
    <property type="project" value="ZFIN"/>
</dbReference>
<dbReference type="GO" id="GO:0030218">
    <property type="term" value="P:erythrocyte differentiation"/>
    <property type="evidence" value="ECO:0000315"/>
    <property type="project" value="ZFIN"/>
</dbReference>
<dbReference type="GO" id="GO:0051726">
    <property type="term" value="P:regulation of cell cycle"/>
    <property type="evidence" value="ECO:0000315"/>
    <property type="project" value="ZFIN"/>
</dbReference>
<dbReference type="GO" id="GO:0042274">
    <property type="term" value="P:ribosomal small subunit biogenesis"/>
    <property type="evidence" value="ECO:0000250"/>
    <property type="project" value="UniProtKB"/>
</dbReference>
<dbReference type="GO" id="GO:0006412">
    <property type="term" value="P:translation"/>
    <property type="evidence" value="ECO:0007669"/>
    <property type="project" value="InterPro"/>
</dbReference>
<dbReference type="FunFam" id="3.30.1370.30:FF:000001">
    <property type="entry name" value="40S ribosomal protein S15a"/>
    <property type="match status" value="1"/>
</dbReference>
<dbReference type="FunFam" id="3.30.1490.10:FF:000002">
    <property type="entry name" value="40S ribosomal protein S15a"/>
    <property type="match status" value="1"/>
</dbReference>
<dbReference type="Gene3D" id="3.30.1370.30">
    <property type="match status" value="1"/>
</dbReference>
<dbReference type="Gene3D" id="3.30.1490.10">
    <property type="match status" value="1"/>
</dbReference>
<dbReference type="HAMAP" id="MF_01302_A">
    <property type="entry name" value="Ribosomal_uS8_A"/>
    <property type="match status" value="1"/>
</dbReference>
<dbReference type="InterPro" id="IPR000630">
    <property type="entry name" value="Ribosomal_uS8"/>
</dbReference>
<dbReference type="InterPro" id="IPR047863">
    <property type="entry name" value="Ribosomal_uS8_CS"/>
</dbReference>
<dbReference type="InterPro" id="IPR035987">
    <property type="entry name" value="Ribosomal_uS8_sf"/>
</dbReference>
<dbReference type="NCBIfam" id="NF003115">
    <property type="entry name" value="PRK04034.1"/>
    <property type="match status" value="1"/>
</dbReference>
<dbReference type="PANTHER" id="PTHR11758">
    <property type="entry name" value="40S RIBOSOMAL PROTEIN S15A"/>
    <property type="match status" value="1"/>
</dbReference>
<dbReference type="Pfam" id="PF00410">
    <property type="entry name" value="Ribosomal_S8"/>
    <property type="match status" value="1"/>
</dbReference>
<dbReference type="SUPFAM" id="SSF56047">
    <property type="entry name" value="Ribosomal protein S8"/>
    <property type="match status" value="1"/>
</dbReference>
<dbReference type="PROSITE" id="PS00053">
    <property type="entry name" value="RIBOSOMAL_S8"/>
    <property type="match status" value="1"/>
</dbReference>
<proteinExistence type="evidence at protein level"/>
<reference key="1">
    <citation type="journal article" date="2004" name="PLoS Biol.">
        <title>Many ribosomal protein genes are cancer genes in zebrafish.</title>
        <authorList>
            <person name="Amsterdam A."/>
            <person name="Sadler K.C."/>
            <person name="Lai K."/>
            <person name="Farrington S."/>
            <person name="Bronson R.T."/>
            <person name="Lees J.A."/>
            <person name="Hopkins N."/>
        </authorList>
    </citation>
    <scope>NUCLEOTIDE SEQUENCE [MRNA]</scope>
</reference>
<reference key="2">
    <citation type="journal article" date="2013" name="Nature">
        <title>The zebrafish reference genome sequence and its relationship to the human genome.</title>
        <authorList>
            <person name="Howe K."/>
            <person name="Clark M.D."/>
            <person name="Torroja C.F."/>
            <person name="Torrance J."/>
            <person name="Berthelot C."/>
            <person name="Muffato M."/>
            <person name="Collins J.E."/>
            <person name="Humphray S."/>
            <person name="McLaren K."/>
            <person name="Matthews L."/>
            <person name="McLaren S."/>
            <person name="Sealy I."/>
            <person name="Caccamo M."/>
            <person name="Churcher C."/>
            <person name="Scott C."/>
            <person name="Barrett J.C."/>
            <person name="Koch R."/>
            <person name="Rauch G.J."/>
            <person name="White S."/>
            <person name="Chow W."/>
            <person name="Kilian B."/>
            <person name="Quintais L.T."/>
            <person name="Guerra-Assuncao J.A."/>
            <person name="Zhou Y."/>
            <person name="Gu Y."/>
            <person name="Yen J."/>
            <person name="Vogel J.H."/>
            <person name="Eyre T."/>
            <person name="Redmond S."/>
            <person name="Banerjee R."/>
            <person name="Chi J."/>
            <person name="Fu B."/>
            <person name="Langley E."/>
            <person name="Maguire S.F."/>
            <person name="Laird G.K."/>
            <person name="Lloyd D."/>
            <person name="Kenyon E."/>
            <person name="Donaldson S."/>
            <person name="Sehra H."/>
            <person name="Almeida-King J."/>
            <person name="Loveland J."/>
            <person name="Trevanion S."/>
            <person name="Jones M."/>
            <person name="Quail M."/>
            <person name="Willey D."/>
            <person name="Hunt A."/>
            <person name="Burton J."/>
            <person name="Sims S."/>
            <person name="McLay K."/>
            <person name="Plumb B."/>
            <person name="Davis J."/>
            <person name="Clee C."/>
            <person name="Oliver K."/>
            <person name="Clark R."/>
            <person name="Riddle C."/>
            <person name="Elliot D."/>
            <person name="Threadgold G."/>
            <person name="Harden G."/>
            <person name="Ware D."/>
            <person name="Begum S."/>
            <person name="Mortimore B."/>
            <person name="Kerry G."/>
            <person name="Heath P."/>
            <person name="Phillimore B."/>
            <person name="Tracey A."/>
            <person name="Corby N."/>
            <person name="Dunn M."/>
            <person name="Johnson C."/>
            <person name="Wood J."/>
            <person name="Clark S."/>
            <person name="Pelan S."/>
            <person name="Griffiths G."/>
            <person name="Smith M."/>
            <person name="Glithero R."/>
            <person name="Howden P."/>
            <person name="Barker N."/>
            <person name="Lloyd C."/>
            <person name="Stevens C."/>
            <person name="Harley J."/>
            <person name="Holt K."/>
            <person name="Panagiotidis G."/>
            <person name="Lovell J."/>
            <person name="Beasley H."/>
            <person name="Henderson C."/>
            <person name="Gordon D."/>
            <person name="Auger K."/>
            <person name="Wright D."/>
            <person name="Collins J."/>
            <person name="Raisen C."/>
            <person name="Dyer L."/>
            <person name="Leung K."/>
            <person name="Robertson L."/>
            <person name="Ambridge K."/>
            <person name="Leongamornlert D."/>
            <person name="McGuire S."/>
            <person name="Gilderthorp R."/>
            <person name="Griffiths C."/>
            <person name="Manthravadi D."/>
            <person name="Nichol S."/>
            <person name="Barker G."/>
            <person name="Whitehead S."/>
            <person name="Kay M."/>
            <person name="Brown J."/>
            <person name="Murnane C."/>
            <person name="Gray E."/>
            <person name="Humphries M."/>
            <person name="Sycamore N."/>
            <person name="Barker D."/>
            <person name="Saunders D."/>
            <person name="Wallis J."/>
            <person name="Babbage A."/>
            <person name="Hammond S."/>
            <person name="Mashreghi-Mohammadi M."/>
            <person name="Barr L."/>
            <person name="Martin S."/>
            <person name="Wray P."/>
            <person name="Ellington A."/>
            <person name="Matthews N."/>
            <person name="Ellwood M."/>
            <person name="Woodmansey R."/>
            <person name="Clark G."/>
            <person name="Cooper J."/>
            <person name="Tromans A."/>
            <person name="Grafham D."/>
            <person name="Skuce C."/>
            <person name="Pandian R."/>
            <person name="Andrews R."/>
            <person name="Harrison E."/>
            <person name="Kimberley A."/>
            <person name="Garnett J."/>
            <person name="Fosker N."/>
            <person name="Hall R."/>
            <person name="Garner P."/>
            <person name="Kelly D."/>
            <person name="Bird C."/>
            <person name="Palmer S."/>
            <person name="Gehring I."/>
            <person name="Berger A."/>
            <person name="Dooley C.M."/>
            <person name="Ersan-Urun Z."/>
            <person name="Eser C."/>
            <person name="Geiger H."/>
            <person name="Geisler M."/>
            <person name="Karotki L."/>
            <person name="Kirn A."/>
            <person name="Konantz J."/>
            <person name="Konantz M."/>
            <person name="Oberlander M."/>
            <person name="Rudolph-Geiger S."/>
            <person name="Teucke M."/>
            <person name="Lanz C."/>
            <person name="Raddatz G."/>
            <person name="Osoegawa K."/>
            <person name="Zhu B."/>
            <person name="Rapp A."/>
            <person name="Widaa S."/>
            <person name="Langford C."/>
            <person name="Yang F."/>
            <person name="Schuster S.C."/>
            <person name="Carter N.P."/>
            <person name="Harrow J."/>
            <person name="Ning Z."/>
            <person name="Herrero J."/>
            <person name="Searle S.M."/>
            <person name="Enright A."/>
            <person name="Geisler R."/>
            <person name="Plasterk R.H."/>
            <person name="Lee C."/>
            <person name="Westerfield M."/>
            <person name="de Jong P.J."/>
            <person name="Zon L.I."/>
            <person name="Postlethwait J.H."/>
            <person name="Nusslein-Volhard C."/>
            <person name="Hubbard T.J."/>
            <person name="Roest Crollius H."/>
            <person name="Rogers J."/>
            <person name="Stemple D.L."/>
        </authorList>
    </citation>
    <scope>NUCLEOTIDE SEQUENCE [LARGE SCALE GENOMIC DNA]</scope>
    <source>
        <strain>Tuebingen</strain>
    </source>
</reference>
<reference key="3">
    <citation type="submission" date="2005-10" db="EMBL/GenBank/DDBJ databases">
        <authorList>
            <consortium name="NIH - Zebrafish Gene Collection (ZGC) project"/>
        </authorList>
    </citation>
    <scope>NUCLEOTIDE SEQUENCE [LARGE SCALE MRNA]</scope>
</reference>
<reference key="4">
    <citation type="journal article" date="2017" name="Haematologica">
        <title>Exome sequencing identified RPS15A as a novel causative gene for Diamond-Blackfan anemia.</title>
        <authorList>
            <person name="Ikeda F."/>
            <person name="Yoshida K."/>
            <person name="Toki T."/>
            <person name="Uechi T."/>
            <person name="Ishida S."/>
            <person name="Nakajima Y."/>
            <person name="Sasahara Y."/>
            <person name="Okuno Y."/>
            <person name="Kanezaki R."/>
            <person name="Terui K."/>
            <person name="Kamio T."/>
            <person name="Kobayashi A."/>
            <person name="Fujita T."/>
            <person name="Sato-Otsubo A."/>
            <person name="Shiraishi Y."/>
            <person name="Tanaka H."/>
            <person name="Chiba K."/>
            <person name="Muramatsu H."/>
            <person name="Kanno H."/>
            <person name="Ohga S."/>
            <person name="Ohara A."/>
            <person name="Kojima S."/>
            <person name="Kenmochi N."/>
            <person name="Miyano S."/>
            <person name="Ogawa S."/>
            <person name="Ito E."/>
        </authorList>
    </citation>
    <scope>FUNCTION</scope>
    <scope>DISRUPTION PHENOTYPE</scope>
</reference>
<accession>Q6Q420</accession>
<keyword id="KW-0002">3D-structure</keyword>
<keyword id="KW-0963">Cytoplasm</keyword>
<keyword id="KW-0539">Nucleus</keyword>
<keyword id="KW-1185">Reference proteome</keyword>
<keyword id="KW-0687">Ribonucleoprotein</keyword>
<keyword id="KW-0689">Ribosomal protein</keyword>
<sequence>MVRMNVLADALKSINNAEKRGKRQVLLRPCSKVIVRFLTVMMKHGYIGEFEIIDDHRAGKIVVNLTGRLNKCGVISPRFDVQLKDLEKWQNNLLPSRQFGFIVLTTSAGIMDHEEARRKHTGGKILGFFF</sequence>